<reference evidence="6" key="1">
    <citation type="journal article" date="2007" name="Nature">
        <title>Evolution of genes and genomes on the Drosophila phylogeny.</title>
        <authorList>
            <consortium name="Drosophila 12 genomes consortium"/>
        </authorList>
    </citation>
    <scope>NUCLEOTIDE SEQUENCE [LARGE SCALE GENOMIC DNA]</scope>
</reference>
<proteinExistence type="inferred from homology"/>
<comment type="function">
    <text evidence="1">Unusual broad substrate spectrum amino acid:sodium cotransporter that promotes absorption of the D isomers of essential amino acids. Neutral amino acids are the preferred substrates, especially methionine and phenylalanine (By similarity).</text>
</comment>
<comment type="subcellular location">
    <subcellularLocation>
        <location evidence="5">Membrane</location>
        <topology evidence="5">Multi-pass membrane protein</topology>
    </subcellularLocation>
</comment>
<comment type="similarity">
    <text evidence="5">Belongs to the sodium:neurotransmitter symporter (SNF) (TC 2.A.22) family.</text>
</comment>
<dbReference type="EMBL" id="CM000366">
    <property type="protein sequence ID" value="EDX17133.1"/>
    <property type="molecule type" value="Genomic_DNA"/>
</dbReference>
<dbReference type="SMR" id="B4R4T6"/>
<dbReference type="STRING" id="7240.B4R4T6"/>
<dbReference type="GlyCosmos" id="B4R4T6">
    <property type="glycosylation" value="3 sites, No reported glycans"/>
</dbReference>
<dbReference type="HOGENOM" id="CLU_006855_9_5_1"/>
<dbReference type="OMA" id="LQNFCDD"/>
<dbReference type="OrthoDB" id="6581954at2759"/>
<dbReference type="PhylomeDB" id="B4R4T6"/>
<dbReference type="Proteomes" id="UP000000304">
    <property type="component" value="Chromosome X"/>
</dbReference>
<dbReference type="GO" id="GO:0005886">
    <property type="term" value="C:plasma membrane"/>
    <property type="evidence" value="ECO:0000305"/>
    <property type="project" value="UniProtKB"/>
</dbReference>
<dbReference type="GO" id="GO:0005283">
    <property type="term" value="F:amino acid:sodium symporter activity"/>
    <property type="evidence" value="ECO:0000250"/>
    <property type="project" value="UniProtKB"/>
</dbReference>
<dbReference type="GO" id="GO:0042943">
    <property type="term" value="F:D-amino acid transmembrane transporter activity"/>
    <property type="evidence" value="ECO:0000250"/>
    <property type="project" value="UniProtKB"/>
</dbReference>
<dbReference type="GO" id="GO:0015179">
    <property type="term" value="F:L-amino acid transmembrane transporter activity"/>
    <property type="evidence" value="ECO:0007669"/>
    <property type="project" value="TreeGrafter"/>
</dbReference>
<dbReference type="GO" id="GO:0015175">
    <property type="term" value="F:neutral L-amino acid transmembrane transporter activity"/>
    <property type="evidence" value="ECO:0000250"/>
    <property type="project" value="UniProtKB"/>
</dbReference>
<dbReference type="GO" id="GO:0089718">
    <property type="term" value="P:amino acid import across plasma membrane"/>
    <property type="evidence" value="ECO:0007669"/>
    <property type="project" value="TreeGrafter"/>
</dbReference>
<dbReference type="GO" id="GO:0042940">
    <property type="term" value="P:D-amino acid transport"/>
    <property type="evidence" value="ECO:0000250"/>
    <property type="project" value="UniProtKB"/>
</dbReference>
<dbReference type="GO" id="GO:0015804">
    <property type="term" value="P:neutral amino acid transport"/>
    <property type="evidence" value="ECO:0000250"/>
    <property type="project" value="UniProtKB"/>
</dbReference>
<dbReference type="GO" id="GO:0006814">
    <property type="term" value="P:sodium ion transport"/>
    <property type="evidence" value="ECO:0000250"/>
    <property type="project" value="UniProtKB"/>
</dbReference>
<dbReference type="CDD" id="cd10324">
    <property type="entry name" value="SLC6sbd"/>
    <property type="match status" value="1"/>
</dbReference>
<dbReference type="InterPro" id="IPR000175">
    <property type="entry name" value="Na/ntran_symport"/>
</dbReference>
<dbReference type="InterPro" id="IPR037272">
    <property type="entry name" value="SNS_sf"/>
</dbReference>
<dbReference type="NCBIfam" id="NF037979">
    <property type="entry name" value="Na_transp"/>
    <property type="match status" value="1"/>
</dbReference>
<dbReference type="PANTHER" id="PTHR11616:SF321">
    <property type="entry name" value="SODIUM-DEPENDENT NUTRIENT AMINO ACID TRANSPORTER 1-RELATED"/>
    <property type="match status" value="1"/>
</dbReference>
<dbReference type="PANTHER" id="PTHR11616">
    <property type="entry name" value="SODIUM/CHLORIDE DEPENDENT TRANSPORTER"/>
    <property type="match status" value="1"/>
</dbReference>
<dbReference type="Pfam" id="PF00209">
    <property type="entry name" value="SNF"/>
    <property type="match status" value="1"/>
</dbReference>
<dbReference type="PRINTS" id="PR00176">
    <property type="entry name" value="NANEUSMPORT"/>
</dbReference>
<dbReference type="SUPFAM" id="SSF161070">
    <property type="entry name" value="SNF-like"/>
    <property type="match status" value="1"/>
</dbReference>
<dbReference type="PROSITE" id="PS00610">
    <property type="entry name" value="NA_NEUROTRAN_SYMP_1"/>
    <property type="match status" value="1"/>
</dbReference>
<dbReference type="PROSITE" id="PS00754">
    <property type="entry name" value="NA_NEUROTRAN_SYMP_2"/>
    <property type="match status" value="1"/>
</dbReference>
<dbReference type="PROSITE" id="PS50267">
    <property type="entry name" value="NA_NEUROTRAN_SYMP_3"/>
    <property type="match status" value="1"/>
</dbReference>
<accession>B4R4T6</accession>
<sequence length="643" mass="71913">MELKGVQPSNGSPNGNGNGATNAASTEKTDAEKPTAERTNWGNGLEFLMSCISVSVGLGNVWRFPFTAYENGGGAFLIPYIIVLFLIGKPMYYLEMIMGQFTSQGTVKIWSVVPGFVGVGYGQAFGTICIISYYSSLLALTLYYLFVSFQSELPWSYCRDEWTNCVNSRPEEYVDNLLTGVSLANESARNLSGIGLVANNETEKLQSSSELYFLNVVIKEKLDISDGVGDPDWKLTLALFVAWVVIFLVIMRGVKSSGKAAYFLALFPYVVLFVLLIRAVTLEGARDGILFFLEPQWGELLNPTVWKEAVVQCFFSLAVGSGPIIMFASYNRFDHGIYRDAMIVTTLDTLTSLLGGITIFAILGNLAHNLQIENIRDVVRSGTGLAFISYPDAISKFQAVPQLFSVLFFFMLFVLGIGSIVALQSTIVTIICDQFKGWKYWKVALTTSVCGFLMGLVYVTPGGQWILTLVDFYGGTYVVFILAIFELAGIVWVYGLQNFCDDIEFMCNRRVSLYWRVCWSFFTPVMMIIIFIYSMATIEPIKYSELYFPEAANVAGWLLFAIGAAQFPLWGLWYASRHPQGTYWKSLKASLKPSDRWGPANPETRREWVIFKNQKAPQRATQKDTSKLGFFWRKIANFCGSNK</sequence>
<evidence type="ECO:0000250" key="1"/>
<evidence type="ECO:0000250" key="2">
    <source>
        <dbReference type="UniProtKB" id="Q9W4C5"/>
    </source>
</evidence>
<evidence type="ECO:0000255" key="3"/>
<evidence type="ECO:0000256" key="4">
    <source>
        <dbReference type="SAM" id="MobiDB-lite"/>
    </source>
</evidence>
<evidence type="ECO:0000305" key="5"/>
<evidence type="ECO:0000312" key="6">
    <source>
        <dbReference type="EMBL" id="EDX17133.1"/>
    </source>
</evidence>
<protein>
    <recommendedName>
        <fullName evidence="2">Sodium-dependent nutrient amino acid transporter 1</fullName>
    </recommendedName>
</protein>
<keyword id="KW-0029">Amino-acid transport</keyword>
<keyword id="KW-0325">Glycoprotein</keyword>
<keyword id="KW-0406">Ion transport</keyword>
<keyword id="KW-0472">Membrane</keyword>
<keyword id="KW-1185">Reference proteome</keyword>
<keyword id="KW-0915">Sodium</keyword>
<keyword id="KW-0739">Sodium transport</keyword>
<keyword id="KW-0769">Symport</keyword>
<keyword id="KW-0812">Transmembrane</keyword>
<keyword id="KW-1133">Transmembrane helix</keyword>
<keyword id="KW-0813">Transport</keyword>
<organism>
    <name type="scientific">Drosophila simulans</name>
    <name type="common">Fruit fly</name>
    <dbReference type="NCBI Taxonomy" id="7240"/>
    <lineage>
        <taxon>Eukaryota</taxon>
        <taxon>Metazoa</taxon>
        <taxon>Ecdysozoa</taxon>
        <taxon>Arthropoda</taxon>
        <taxon>Hexapoda</taxon>
        <taxon>Insecta</taxon>
        <taxon>Pterygota</taxon>
        <taxon>Neoptera</taxon>
        <taxon>Endopterygota</taxon>
        <taxon>Diptera</taxon>
        <taxon>Brachycera</taxon>
        <taxon>Muscomorpha</taxon>
        <taxon>Ephydroidea</taxon>
        <taxon>Drosophilidae</taxon>
        <taxon>Drosophila</taxon>
        <taxon>Sophophora</taxon>
    </lineage>
</organism>
<name>NAAT1_DROSI</name>
<feature type="chain" id="PRO_0000386587" description="Sodium-dependent nutrient amino acid transporter 1">
    <location>
        <begin position="1"/>
        <end position="643"/>
    </location>
</feature>
<feature type="topological domain" description="Cytoplasmic" evidence="3">
    <location>
        <begin position="1"/>
        <end position="40"/>
    </location>
</feature>
<feature type="transmembrane region" description="Helical; Name=1" evidence="3">
    <location>
        <begin position="41"/>
        <end position="61"/>
    </location>
</feature>
<feature type="transmembrane region" description="Helical; Name=2" evidence="3">
    <location>
        <begin position="74"/>
        <end position="94"/>
    </location>
</feature>
<feature type="transmembrane region" description="Helical; Name=3" evidence="3">
    <location>
        <begin position="111"/>
        <end position="131"/>
    </location>
</feature>
<feature type="transmembrane region" description="Helical; Name=4" evidence="3">
    <location>
        <begin position="231"/>
        <end position="251"/>
    </location>
</feature>
<feature type="transmembrane region" description="Helical; Name=5" evidence="3">
    <location>
        <begin position="260"/>
        <end position="280"/>
    </location>
</feature>
<feature type="transmembrane region" description="Helical; Name=6" evidence="3">
    <location>
        <begin position="309"/>
        <end position="329"/>
    </location>
</feature>
<feature type="transmembrane region" description="Helical; Name=7" evidence="3">
    <location>
        <begin position="343"/>
        <end position="363"/>
    </location>
</feature>
<feature type="transmembrane region" description="Helical; Name=8" evidence="3">
    <location>
        <begin position="403"/>
        <end position="423"/>
    </location>
</feature>
<feature type="transmembrane region" description="Helical; Name=9" evidence="3">
    <location>
        <begin position="449"/>
        <end position="469"/>
    </location>
</feature>
<feature type="transmembrane region" description="Helical; Name=10" evidence="3">
    <location>
        <begin position="476"/>
        <end position="496"/>
    </location>
</feature>
<feature type="transmembrane region" description="Helical; Name=11" evidence="3">
    <location>
        <begin position="518"/>
        <end position="538"/>
    </location>
</feature>
<feature type="transmembrane region" description="Helical; Name=12" evidence="3">
    <location>
        <begin position="554"/>
        <end position="574"/>
    </location>
</feature>
<feature type="region of interest" description="Disordered" evidence="4">
    <location>
        <begin position="1"/>
        <end position="38"/>
    </location>
</feature>
<feature type="compositionally biased region" description="Low complexity" evidence="4">
    <location>
        <begin position="8"/>
        <end position="26"/>
    </location>
</feature>
<feature type="compositionally biased region" description="Basic and acidic residues" evidence="4">
    <location>
        <begin position="27"/>
        <end position="36"/>
    </location>
</feature>
<feature type="glycosylation site" description="N-linked (GlcNAc...) asparagine" evidence="3">
    <location>
        <position position="185"/>
    </location>
</feature>
<feature type="glycosylation site" description="N-linked (GlcNAc...) asparagine" evidence="3">
    <location>
        <position position="190"/>
    </location>
</feature>
<feature type="glycosylation site" description="N-linked (GlcNAc...) asparagine" evidence="3">
    <location>
        <position position="200"/>
    </location>
</feature>
<gene>
    <name evidence="2" type="primary">NAAT1</name>
    <name type="ORF">GD16262</name>
</gene>